<accession>P54264</accession>
<accession>Q1G9Z6</accession>
<dbReference type="EC" id="6.3.1.1" evidence="1"/>
<dbReference type="EMBL" id="X89438">
    <property type="protein sequence ID" value="CAA61602.1"/>
    <property type="molecule type" value="Genomic_DNA"/>
</dbReference>
<dbReference type="EMBL" id="CR954253">
    <property type="protein sequence ID" value="CAI97996.1"/>
    <property type="molecule type" value="Genomic_DNA"/>
</dbReference>
<dbReference type="PIR" id="S71073">
    <property type="entry name" value="S71073"/>
</dbReference>
<dbReference type="RefSeq" id="WP_011543942.1">
    <property type="nucleotide sequence ID" value="NC_008054.1"/>
</dbReference>
<dbReference type="SMR" id="P54264"/>
<dbReference type="STRING" id="390333.Ldb1194"/>
<dbReference type="KEGG" id="ldb:Ldb1194"/>
<dbReference type="PATRIC" id="fig|390333.7.peg.1064"/>
<dbReference type="eggNOG" id="COG2502">
    <property type="taxonomic scope" value="Bacteria"/>
</dbReference>
<dbReference type="HOGENOM" id="CLU_071543_0_0_9"/>
<dbReference type="BioCyc" id="LDEL390333:LDB_RS05125-MONOMER"/>
<dbReference type="UniPathway" id="UPA00134">
    <property type="reaction ID" value="UER00194"/>
</dbReference>
<dbReference type="Proteomes" id="UP000001259">
    <property type="component" value="Chromosome"/>
</dbReference>
<dbReference type="GO" id="GO:0005829">
    <property type="term" value="C:cytosol"/>
    <property type="evidence" value="ECO:0007669"/>
    <property type="project" value="TreeGrafter"/>
</dbReference>
<dbReference type="GO" id="GO:0004071">
    <property type="term" value="F:aspartate-ammonia ligase activity"/>
    <property type="evidence" value="ECO:0007669"/>
    <property type="project" value="UniProtKB-UniRule"/>
</dbReference>
<dbReference type="GO" id="GO:0005524">
    <property type="term" value="F:ATP binding"/>
    <property type="evidence" value="ECO:0007669"/>
    <property type="project" value="UniProtKB-UniRule"/>
</dbReference>
<dbReference type="GO" id="GO:0140096">
    <property type="term" value="F:catalytic activity, acting on a protein"/>
    <property type="evidence" value="ECO:0007669"/>
    <property type="project" value="UniProtKB-ARBA"/>
</dbReference>
<dbReference type="GO" id="GO:0016740">
    <property type="term" value="F:transferase activity"/>
    <property type="evidence" value="ECO:0007669"/>
    <property type="project" value="UniProtKB-ARBA"/>
</dbReference>
<dbReference type="GO" id="GO:0070981">
    <property type="term" value="P:L-asparagine biosynthetic process"/>
    <property type="evidence" value="ECO:0007669"/>
    <property type="project" value="UniProtKB-UniRule"/>
</dbReference>
<dbReference type="CDD" id="cd00645">
    <property type="entry name" value="AsnA"/>
    <property type="match status" value="1"/>
</dbReference>
<dbReference type="Gene3D" id="3.30.930.10">
    <property type="entry name" value="Bira Bifunctional Protein, Domain 2"/>
    <property type="match status" value="1"/>
</dbReference>
<dbReference type="HAMAP" id="MF_00555">
    <property type="entry name" value="AsnA"/>
    <property type="match status" value="1"/>
</dbReference>
<dbReference type="InterPro" id="IPR006195">
    <property type="entry name" value="aa-tRNA-synth_II"/>
</dbReference>
<dbReference type="InterPro" id="IPR045864">
    <property type="entry name" value="aa-tRNA-synth_II/BPL/LPL"/>
</dbReference>
<dbReference type="InterPro" id="IPR004618">
    <property type="entry name" value="AsnA"/>
</dbReference>
<dbReference type="NCBIfam" id="TIGR00669">
    <property type="entry name" value="asnA"/>
    <property type="match status" value="1"/>
</dbReference>
<dbReference type="PANTHER" id="PTHR30073">
    <property type="entry name" value="ASPARTATE--AMMONIA LIGASE"/>
    <property type="match status" value="1"/>
</dbReference>
<dbReference type="PANTHER" id="PTHR30073:SF5">
    <property type="entry name" value="ASPARTATE--AMMONIA LIGASE"/>
    <property type="match status" value="1"/>
</dbReference>
<dbReference type="Pfam" id="PF03590">
    <property type="entry name" value="AsnA"/>
    <property type="match status" value="1"/>
</dbReference>
<dbReference type="PIRSF" id="PIRSF001555">
    <property type="entry name" value="Asp_ammon_ligase"/>
    <property type="match status" value="1"/>
</dbReference>
<dbReference type="SUPFAM" id="SSF55681">
    <property type="entry name" value="Class II aaRS and biotin synthetases"/>
    <property type="match status" value="1"/>
</dbReference>
<dbReference type="PROSITE" id="PS50862">
    <property type="entry name" value="AA_TRNA_LIGASE_II"/>
    <property type="match status" value="1"/>
</dbReference>
<reference key="1">
    <citation type="journal article" date="1996" name="J. Bacteriol.">
        <title>Lactobacillus bulgaricus asparagine synthetase and asparaginyl-tRNA synthetase: coregulation by transcription antitermination?</title>
        <authorList>
            <person name="Kim S.I."/>
            <person name="Germond J.-E."/>
            <person name="Pridmore D."/>
            <person name="Soell D."/>
        </authorList>
    </citation>
    <scope>NUCLEOTIDE SEQUENCE [GENOMIC DNA]</scope>
</reference>
<reference key="2">
    <citation type="journal article" date="2006" name="Proc. Natl. Acad. Sci. U.S.A.">
        <title>The complete genome sequence of Lactobacillus bulgaricus reveals extensive and ongoing reductive evolution.</title>
        <authorList>
            <person name="van de Guchte M."/>
            <person name="Penaud S."/>
            <person name="Grimaldi C."/>
            <person name="Barbe V."/>
            <person name="Bryson K."/>
            <person name="Nicolas P."/>
            <person name="Robert C."/>
            <person name="Oztas S."/>
            <person name="Mangenot S."/>
            <person name="Couloux A."/>
            <person name="Loux V."/>
            <person name="Dervyn R."/>
            <person name="Bossy R."/>
            <person name="Bolotin A."/>
            <person name="Batto J.-M."/>
            <person name="Walunas T."/>
            <person name="Gibrat J.-F."/>
            <person name="Bessieres P."/>
            <person name="Weissenbach J."/>
            <person name="Ehrlich S.D."/>
            <person name="Maguin E."/>
        </authorList>
    </citation>
    <scope>NUCLEOTIDE SEQUENCE [LARGE SCALE GENOMIC DNA]</scope>
    <source>
        <strain>ATCC 11842 / DSM 20081 / BCRC 10696 / JCM 1002 / NBRC 13953 / NCIMB 11778 / NCTC 12712 / WDCM 00102 / Lb 14</strain>
    </source>
</reference>
<gene>
    <name evidence="1" type="primary">asnA</name>
    <name type="ordered locus">Ldb1194</name>
</gene>
<organism>
    <name type="scientific">Lactobacillus delbrueckii subsp. bulgaricus (strain ATCC 11842 / DSM 20081 / BCRC 10696 / JCM 1002 / NBRC 13953 / NCIMB 11778 / NCTC 12712 / WDCM 00102 / Lb 14)</name>
    <dbReference type="NCBI Taxonomy" id="390333"/>
    <lineage>
        <taxon>Bacteria</taxon>
        <taxon>Bacillati</taxon>
        <taxon>Bacillota</taxon>
        <taxon>Bacilli</taxon>
        <taxon>Lactobacillales</taxon>
        <taxon>Lactobacillaceae</taxon>
        <taxon>Lactobacillus</taxon>
    </lineage>
</organism>
<name>ASNA_LACDA</name>
<keyword id="KW-0028">Amino-acid biosynthesis</keyword>
<keyword id="KW-0061">Asparagine biosynthesis</keyword>
<keyword id="KW-0067">ATP-binding</keyword>
<keyword id="KW-0963">Cytoplasm</keyword>
<keyword id="KW-0436">Ligase</keyword>
<keyword id="KW-0547">Nucleotide-binding</keyword>
<keyword id="KW-1185">Reference proteome</keyword>
<evidence type="ECO:0000255" key="1">
    <source>
        <dbReference type="HAMAP-Rule" id="MF_00555"/>
    </source>
</evidence>
<evidence type="ECO:0000305" key="2"/>
<comment type="catalytic activity">
    <reaction evidence="1">
        <text>L-aspartate + NH4(+) + ATP = L-asparagine + AMP + diphosphate + H(+)</text>
        <dbReference type="Rhea" id="RHEA:11372"/>
        <dbReference type="ChEBI" id="CHEBI:15378"/>
        <dbReference type="ChEBI" id="CHEBI:28938"/>
        <dbReference type="ChEBI" id="CHEBI:29991"/>
        <dbReference type="ChEBI" id="CHEBI:30616"/>
        <dbReference type="ChEBI" id="CHEBI:33019"/>
        <dbReference type="ChEBI" id="CHEBI:58048"/>
        <dbReference type="ChEBI" id="CHEBI:456215"/>
        <dbReference type="EC" id="6.3.1.1"/>
    </reaction>
</comment>
<comment type="pathway">
    <text evidence="1">Amino-acid biosynthesis; L-asparagine biosynthesis; L-asparagine from L-aspartate (ammonia route): step 1/1.</text>
</comment>
<comment type="subcellular location">
    <subcellularLocation>
        <location>Cytoplasm</location>
    </subcellularLocation>
</comment>
<comment type="similarity">
    <text evidence="1">Belongs to the class-II aminoacyl-tRNA synthetase family. AsnA subfamily.</text>
</comment>
<feature type="chain" id="PRO_0000195879" description="Aspartate--ammonia ligase">
    <location>
        <begin position="1"/>
        <end position="338"/>
    </location>
</feature>
<feature type="sequence conflict" description="In Ref. 1; CAA61602." evidence="2" ref="1">
    <original>RETEKAIRYIRETFQT</original>
    <variation>AKRKRQSATSGKPSS</variation>
    <location>
        <begin position="17"/>
        <end position="32"/>
    </location>
</feature>
<feature type="sequence conflict" description="In Ref. 1; CAA61602." evidence="2" ref="1">
    <original>GKAHI</original>
    <variation>QGPH</variation>
    <location>
        <begin position="310"/>
        <end position="314"/>
    </location>
</feature>
<sequence>MAKLVIPSDYDPKMTIRETEKAIRYIRETFQTEFGTAMNLERISAPMFVKKSSGLNDNLSGWEKPVSFTLHDGNEGELQIVHSLAKWKRWALKHYGFSHGEGLFTNMNAIRKDEEVLDNLHSVYVDQWDWEKVIDKSERTEATLRQTVQRIFETIKGMEYHVRALYPQAAYHLPEEISFVTSEELEARWPSLTPSEREDKICQEKGAVFLEHIGGALPLSKKPHDLRAPDYDDWTLNGDLLFWYEPLQRAFEVSSMSIRVDEDRLQEQLKLAGAEDRLDLPFHQALLKGDLPYSIGGGIGQSRLCMLLLGKAHIGEVQASIWPDEIVEKCQAAKIQLL</sequence>
<proteinExistence type="inferred from homology"/>
<protein>
    <recommendedName>
        <fullName evidence="1">Aspartate--ammonia ligase</fullName>
        <ecNumber evidence="1">6.3.1.1</ecNumber>
    </recommendedName>
    <alternativeName>
        <fullName evidence="1">Asparagine synthetase A</fullName>
    </alternativeName>
</protein>